<feature type="chain" id="PRO_0000135917" description="Cobalt-precorrin-6A reductase">
    <location>
        <begin position="1"/>
        <end position="249"/>
    </location>
</feature>
<dbReference type="EC" id="1.3.1.106"/>
<dbReference type="EMBL" id="L77117">
    <property type="protein sequence ID" value="AAB98544.1"/>
    <property type="molecule type" value="Genomic_DNA"/>
</dbReference>
<dbReference type="PIR" id="H64368">
    <property type="entry name" value="H64368"/>
</dbReference>
<dbReference type="RefSeq" id="WP_010870056.1">
    <property type="nucleotide sequence ID" value="NC_000909.1"/>
</dbReference>
<dbReference type="SMR" id="Q57972"/>
<dbReference type="FunCoup" id="Q57972">
    <property type="interactions" value="110"/>
</dbReference>
<dbReference type="STRING" id="243232.MJ_0552"/>
<dbReference type="PaxDb" id="243232-MJ_0552"/>
<dbReference type="EnsemblBacteria" id="AAB98544">
    <property type="protein sequence ID" value="AAB98544"/>
    <property type="gene ID" value="MJ_0552"/>
</dbReference>
<dbReference type="GeneID" id="1451417"/>
<dbReference type="KEGG" id="mja:MJ_0552"/>
<dbReference type="eggNOG" id="arCOG04852">
    <property type="taxonomic scope" value="Archaea"/>
</dbReference>
<dbReference type="HOGENOM" id="CLU_068627_0_0_2"/>
<dbReference type="InParanoid" id="Q57972"/>
<dbReference type="OrthoDB" id="6027at2157"/>
<dbReference type="PhylomeDB" id="Q57972"/>
<dbReference type="UniPathway" id="UPA00148">
    <property type="reaction ID" value="UER00228"/>
</dbReference>
<dbReference type="Proteomes" id="UP000000805">
    <property type="component" value="Chromosome"/>
</dbReference>
<dbReference type="GO" id="GO:0016994">
    <property type="term" value="F:precorrin-6A reductase activity"/>
    <property type="evidence" value="ECO:0007669"/>
    <property type="project" value="InterPro"/>
</dbReference>
<dbReference type="GO" id="GO:0009236">
    <property type="term" value="P:cobalamin biosynthetic process"/>
    <property type="evidence" value="ECO:0007669"/>
    <property type="project" value="UniProtKB-UniPathway"/>
</dbReference>
<dbReference type="InterPro" id="IPR003723">
    <property type="entry name" value="Precorrin-6x_reduct"/>
</dbReference>
<dbReference type="NCBIfam" id="TIGR00715">
    <property type="entry name" value="precor6x_red"/>
    <property type="match status" value="1"/>
</dbReference>
<dbReference type="PANTHER" id="PTHR36925">
    <property type="entry name" value="COBALT-PRECORRIN-6A REDUCTASE"/>
    <property type="match status" value="1"/>
</dbReference>
<dbReference type="PANTHER" id="PTHR36925:SF1">
    <property type="entry name" value="COBALT-PRECORRIN-6A REDUCTASE"/>
    <property type="match status" value="1"/>
</dbReference>
<dbReference type="Pfam" id="PF02571">
    <property type="entry name" value="CbiJ"/>
    <property type="match status" value="1"/>
</dbReference>
<dbReference type="PROSITE" id="PS51014">
    <property type="entry name" value="COBK_CBIJ"/>
    <property type="match status" value="1"/>
</dbReference>
<gene>
    <name type="primary">cbiJ</name>
    <name type="ordered locus">MJ0552</name>
</gene>
<reference key="1">
    <citation type="journal article" date="1996" name="Science">
        <title>Complete genome sequence of the methanogenic archaeon, Methanococcus jannaschii.</title>
        <authorList>
            <person name="Bult C.J."/>
            <person name="White O."/>
            <person name="Olsen G.J."/>
            <person name="Zhou L."/>
            <person name="Fleischmann R.D."/>
            <person name="Sutton G.G."/>
            <person name="Blake J.A."/>
            <person name="FitzGerald L.M."/>
            <person name="Clayton R.A."/>
            <person name="Gocayne J.D."/>
            <person name="Kerlavage A.R."/>
            <person name="Dougherty B.A."/>
            <person name="Tomb J.-F."/>
            <person name="Adams M.D."/>
            <person name="Reich C.I."/>
            <person name="Overbeek R."/>
            <person name="Kirkness E.F."/>
            <person name="Weinstock K.G."/>
            <person name="Merrick J.M."/>
            <person name="Glodek A."/>
            <person name="Scott J.L."/>
            <person name="Geoghagen N.S.M."/>
            <person name="Weidman J.F."/>
            <person name="Fuhrmann J.L."/>
            <person name="Nguyen D."/>
            <person name="Utterback T.R."/>
            <person name="Kelley J.M."/>
            <person name="Peterson J.D."/>
            <person name="Sadow P.W."/>
            <person name="Hanna M.C."/>
            <person name="Cotton M.D."/>
            <person name="Roberts K.M."/>
            <person name="Hurst M.A."/>
            <person name="Kaine B.P."/>
            <person name="Borodovsky M."/>
            <person name="Klenk H.-P."/>
            <person name="Fraser C.M."/>
            <person name="Smith H.O."/>
            <person name="Woese C.R."/>
            <person name="Venter J.C."/>
        </authorList>
    </citation>
    <scope>NUCLEOTIDE SEQUENCE [LARGE SCALE GENOMIC DNA]</scope>
    <source>
        <strain>ATCC 43067 / DSM 2661 / JAL-1 / JCM 10045 / NBRC 100440</strain>
    </source>
</reference>
<accession>Q57972</accession>
<name>CBIJ_METJA</name>
<proteinExistence type="inferred from homology"/>
<organism>
    <name type="scientific">Methanocaldococcus jannaschii (strain ATCC 43067 / DSM 2661 / JAL-1 / JCM 10045 / NBRC 100440)</name>
    <name type="common">Methanococcus jannaschii</name>
    <dbReference type="NCBI Taxonomy" id="243232"/>
    <lineage>
        <taxon>Archaea</taxon>
        <taxon>Methanobacteriati</taxon>
        <taxon>Methanobacteriota</taxon>
        <taxon>Methanomada group</taxon>
        <taxon>Methanococci</taxon>
        <taxon>Methanococcales</taxon>
        <taxon>Methanocaldococcaceae</taxon>
        <taxon>Methanocaldococcus</taxon>
    </lineage>
</organism>
<evidence type="ECO:0000250" key="1"/>
<evidence type="ECO:0000255" key="2">
    <source>
        <dbReference type="PROSITE-ProRule" id="PRU00356"/>
    </source>
</evidence>
<comment type="function">
    <text evidence="1">Catalyzes the reduction of the macrocycle of cobalt-precorrin-6A to cobalt-precorrin-6B.</text>
</comment>
<comment type="catalytic activity">
    <reaction>
        <text>Co-precorrin-6B + NAD(+) = Co-precorrin-6A + NADH + H(+)</text>
        <dbReference type="Rhea" id="RHEA:15625"/>
        <dbReference type="ChEBI" id="CHEBI:15378"/>
        <dbReference type="ChEBI" id="CHEBI:57540"/>
        <dbReference type="ChEBI" id="CHEBI:57945"/>
        <dbReference type="ChEBI" id="CHEBI:60064"/>
        <dbReference type="ChEBI" id="CHEBI:72780"/>
        <dbReference type="EC" id="1.3.1.106"/>
    </reaction>
</comment>
<comment type="pathway">
    <text>Cofactor biosynthesis; adenosylcobalamin biosynthesis; cob(II)yrinate a,c-diamide from sirohydrochlorin (anaerobic route): step 7/10.</text>
</comment>
<comment type="similarity">
    <text evidence="2">Belongs to the precorrin-6x reductase family.</text>
</comment>
<sequence length="249" mass="28177">MNLLLMGGTKDSVEIGKKLRDLGDLFILYTSTTDYGGKLGEEFANKVITKPLDKNELKEVIKKYNIDILVDATHPFAINASKNAIEVCKELNIKYVRFERKEEKINHPNIIYVKDFEEAARLAKKANKVFHMAGIKNLKMVVDIVGKDKVIARVLPISVSEALKILPQKQIVAMYGTFSKELNKYLIRDYNCDVIITKDSGESGGFKEKVYGALEAEAKVIVVERPKIDYPVCFDDIDELIKYIANLKI</sequence>
<protein>
    <recommendedName>
        <fullName>Cobalt-precorrin-6A reductase</fullName>
        <ecNumber>1.3.1.106</ecNumber>
    </recommendedName>
</protein>
<keyword id="KW-0169">Cobalamin biosynthesis</keyword>
<keyword id="KW-0520">NAD</keyword>
<keyword id="KW-0560">Oxidoreductase</keyword>
<keyword id="KW-1185">Reference proteome</keyword>